<name>VSPA_BOTJA</name>
<organism>
    <name type="scientific">Bothrops jararaca</name>
    <name type="common">Jararaca</name>
    <name type="synonym">Bothrops jajaraca</name>
    <dbReference type="NCBI Taxonomy" id="8724"/>
    <lineage>
        <taxon>Eukaryota</taxon>
        <taxon>Metazoa</taxon>
        <taxon>Chordata</taxon>
        <taxon>Craniata</taxon>
        <taxon>Vertebrata</taxon>
        <taxon>Euteleostomi</taxon>
        <taxon>Lepidosauria</taxon>
        <taxon>Squamata</taxon>
        <taxon>Bifurcata</taxon>
        <taxon>Unidentata</taxon>
        <taxon>Episquamata</taxon>
        <taxon>Toxicofera</taxon>
        <taxon>Serpentes</taxon>
        <taxon>Colubroidea</taxon>
        <taxon>Viperidae</taxon>
        <taxon>Crotalinae</taxon>
        <taxon>Bothrops</taxon>
    </lineage>
</organism>
<evidence type="ECO:0000250" key="1"/>
<evidence type="ECO:0000255" key="2">
    <source>
        <dbReference type="PROSITE-ProRule" id="PRU00274"/>
    </source>
</evidence>
<evidence type="ECO:0000269" key="3">
    <source>
    </source>
</evidence>
<evidence type="ECO:0000305" key="4"/>
<keyword id="KW-1204">Blood coagulation cascade activating toxin</keyword>
<keyword id="KW-0903">Direct protein sequencing</keyword>
<keyword id="KW-1015">Disulfide bond</keyword>
<keyword id="KW-0325">Glycoprotein</keyword>
<keyword id="KW-1199">Hemostasis impairing toxin</keyword>
<keyword id="KW-0378">Hydrolase</keyword>
<keyword id="KW-1202">Platelet aggregation activating toxin</keyword>
<keyword id="KW-0645">Protease</keyword>
<keyword id="KW-0964">Secreted</keyword>
<keyword id="KW-0720">Serine protease</keyword>
<keyword id="KW-0800">Toxin</keyword>
<comment type="function">
    <text evidence="3">Thrombin-like snake venom serine protease that clots fibrinogen by releasing fibrinopeptide A from the alpha chain of fibrinogen (FGA), induces platelet aggregation through its interaction with GPIb (GP1BA/GP1BB), and activates factor VIII (F8).</text>
</comment>
<comment type="catalytic activity">
    <reaction>
        <text>Selective cleavage of Arg-|-Xaa bond in fibrinogen, to form fibrin, and release fibrinopeptide A. The specificity of further degradation of fibrinogen varies with species origin of the enzyme.</text>
        <dbReference type="EC" id="3.4.21.74"/>
    </reaction>
</comment>
<comment type="activity regulation">
    <text evidence="3">Inhibited by diisopropylfluorophosphate (DFP), but not by hirudin.</text>
</comment>
<comment type="biophysicochemical properties">
    <phDependence>
        <text evidence="3">Optimum pH is 7.4-8.0 for the clotting activity.</text>
    </phDependence>
</comment>
<comment type="subunit">
    <text evidence="3">Monomer.</text>
</comment>
<comment type="subcellular location">
    <subcellularLocation>
        <location evidence="3">Secreted</location>
    </subcellularLocation>
</comment>
<comment type="tissue specificity">
    <text evidence="3">Expressed by the venom gland.</text>
</comment>
<comment type="similarity">
    <text evidence="2">Belongs to the peptidase S1 family. Snake venom subfamily.</text>
</comment>
<proteinExistence type="evidence at protein level"/>
<accession>P81661</accession>
<dbReference type="EC" id="3.4.21.74"/>
<dbReference type="PIR" id="A54361">
    <property type="entry name" value="A54361"/>
</dbReference>
<dbReference type="SMR" id="P81661"/>
<dbReference type="GO" id="GO:0005576">
    <property type="term" value="C:extracellular region"/>
    <property type="evidence" value="ECO:0007669"/>
    <property type="project" value="UniProtKB-SubCell"/>
</dbReference>
<dbReference type="GO" id="GO:0030141">
    <property type="term" value="C:secretory granule"/>
    <property type="evidence" value="ECO:0007669"/>
    <property type="project" value="TreeGrafter"/>
</dbReference>
<dbReference type="GO" id="GO:0004252">
    <property type="term" value="F:serine-type endopeptidase activity"/>
    <property type="evidence" value="ECO:0007669"/>
    <property type="project" value="InterPro"/>
</dbReference>
<dbReference type="GO" id="GO:0090729">
    <property type="term" value="F:toxin activity"/>
    <property type="evidence" value="ECO:0007669"/>
    <property type="project" value="UniProtKB-KW"/>
</dbReference>
<dbReference type="GO" id="GO:0006508">
    <property type="term" value="P:proteolysis"/>
    <property type="evidence" value="ECO:0007669"/>
    <property type="project" value="UniProtKB-KW"/>
</dbReference>
<dbReference type="CDD" id="cd00190">
    <property type="entry name" value="Tryp_SPc"/>
    <property type="match status" value="1"/>
</dbReference>
<dbReference type="FunFam" id="2.40.10.10:FF:000158">
    <property type="entry name" value="Thrombin-like enzyme saxthrombin"/>
    <property type="match status" value="1"/>
</dbReference>
<dbReference type="FunFam" id="2.40.10.10:FF:000153">
    <property type="entry name" value="Venom plasminogen activator TSV-PA"/>
    <property type="match status" value="1"/>
</dbReference>
<dbReference type="Gene3D" id="2.40.10.10">
    <property type="entry name" value="Trypsin-like serine proteases"/>
    <property type="match status" value="2"/>
</dbReference>
<dbReference type="InterPro" id="IPR009003">
    <property type="entry name" value="Peptidase_S1_PA"/>
</dbReference>
<dbReference type="InterPro" id="IPR043504">
    <property type="entry name" value="Peptidase_S1_PA_chymotrypsin"/>
</dbReference>
<dbReference type="InterPro" id="IPR001314">
    <property type="entry name" value="Peptidase_S1A"/>
</dbReference>
<dbReference type="InterPro" id="IPR001254">
    <property type="entry name" value="Trypsin_dom"/>
</dbReference>
<dbReference type="InterPro" id="IPR018114">
    <property type="entry name" value="TRYPSIN_HIS"/>
</dbReference>
<dbReference type="InterPro" id="IPR033116">
    <property type="entry name" value="TRYPSIN_SER"/>
</dbReference>
<dbReference type="PANTHER" id="PTHR24271:SF47">
    <property type="entry name" value="KALLIKREIN-1"/>
    <property type="match status" value="1"/>
</dbReference>
<dbReference type="PANTHER" id="PTHR24271">
    <property type="entry name" value="KALLIKREIN-RELATED"/>
    <property type="match status" value="1"/>
</dbReference>
<dbReference type="Pfam" id="PF00089">
    <property type="entry name" value="Trypsin"/>
    <property type="match status" value="1"/>
</dbReference>
<dbReference type="PRINTS" id="PR00722">
    <property type="entry name" value="CHYMOTRYPSIN"/>
</dbReference>
<dbReference type="SMART" id="SM00020">
    <property type="entry name" value="Tryp_SPc"/>
    <property type="match status" value="1"/>
</dbReference>
<dbReference type="SUPFAM" id="SSF50494">
    <property type="entry name" value="Trypsin-like serine proteases"/>
    <property type="match status" value="1"/>
</dbReference>
<dbReference type="PROSITE" id="PS50240">
    <property type="entry name" value="TRYPSIN_DOM"/>
    <property type="match status" value="1"/>
</dbReference>
<dbReference type="PROSITE" id="PS00134">
    <property type="entry name" value="TRYPSIN_HIS"/>
    <property type="match status" value="1"/>
</dbReference>
<dbReference type="PROSITE" id="PS00135">
    <property type="entry name" value="TRYPSIN_SER"/>
    <property type="match status" value="1"/>
</dbReference>
<feature type="chain" id="PRO_0000088731" description="Thrombin-like enzyme bothrombin">
    <location>
        <begin position="1"/>
        <end position="232"/>
    </location>
</feature>
<feature type="domain" description="Peptidase S1" evidence="2">
    <location>
        <begin position="1"/>
        <end position="223"/>
    </location>
</feature>
<feature type="active site" description="Charge relay system" evidence="1">
    <location>
        <position position="41"/>
    </location>
</feature>
<feature type="active site" description="Charge relay system" evidence="1">
    <location>
        <position position="86"/>
    </location>
</feature>
<feature type="active site" description="Charge relay system" evidence="1">
    <location>
        <position position="178"/>
    </location>
</feature>
<feature type="glycosylation site" description="N-linked (GlcNAc...) asparagine" evidence="4">
    <location>
        <position position="98"/>
    </location>
</feature>
<feature type="glycosylation site" description="N-linked (GlcNAc...) asparagine" evidence="4">
    <location>
        <position position="146"/>
    </location>
</feature>
<feature type="glycosylation site" description="N-linked (GlcNAc...) asparagine" evidence="4">
    <location>
        <position position="225"/>
    </location>
</feature>
<feature type="disulfide bond" evidence="2">
    <location>
        <begin position="7"/>
        <end position="139"/>
    </location>
</feature>
<feature type="disulfide bond" evidence="2">
    <location>
        <begin position="26"/>
        <end position="42"/>
    </location>
</feature>
<feature type="disulfide bond" evidence="2">
    <location>
        <begin position="74"/>
        <end position="230"/>
    </location>
</feature>
<feature type="disulfide bond" evidence="2">
    <location>
        <begin position="118"/>
        <end position="184"/>
    </location>
</feature>
<feature type="disulfide bond" evidence="2">
    <location>
        <begin position="150"/>
        <end position="163"/>
    </location>
</feature>
<feature type="disulfide bond" evidence="2">
    <location>
        <begin position="174"/>
        <end position="199"/>
    </location>
</feature>
<protein>
    <recommendedName>
        <fullName>Thrombin-like enzyme bothrombin</fullName>
        <shortName>SVTLE</shortName>
        <ecNumber>3.4.21.74</ecNumber>
    </recommendedName>
    <alternativeName>
        <fullName>Factor VIII activator</fullName>
    </alternativeName>
    <alternativeName>
        <fullName>Fibrinogen-clotting enzyme</fullName>
    </alternativeName>
    <alternativeName>
        <fullName>Snake venom serine protease</fullName>
        <shortName>SVSP</shortName>
    </alternativeName>
    <alternativeName>
        <fullName>Venombin A</fullName>
    </alternativeName>
</protein>
<sequence length="232" mass="25584">VIGGDECDINEHPFLAFMYYSPQYFCGMTLINQEWVLTAAHCDKTYMRIYLGIHTRSVANDDEVIRYPKEKFICPNKKKNVITDKDIMLIRLNRPVKNSTHIAPISLPSNPPSVGSVCRIMGWGAITTSEDTYPDVPHCANINLFNNTVCREAYNGLPAKTLCAGVLQGGIDTCGGDSGGPLICNGQFQGILSWGSDPCAEPRKPAFYTKVFDYLPWIQSIIAGNKTATCPP</sequence>
<reference key="1">
    <citation type="journal article" date="1994" name="Biochemistry">
        <title>Purification and characterization of bothrombin, a fibrinogen-clotting serine protease from the venom of Bothrops jararaca.</title>
        <authorList>
            <person name="Nishida S."/>
            <person name="Fujimura Y."/>
            <person name="Miura S."/>
            <person name="Ozaki Y."/>
            <person name="Usami Y."/>
            <person name="Suzuki M."/>
            <person name="Titani K."/>
            <person name="Yoshida E."/>
            <person name="Sugimoto M."/>
            <person name="Yoshioka A."/>
            <person name="Fukui H."/>
        </authorList>
    </citation>
    <scope>PROTEIN SEQUENCE</scope>
    <scope>FUNCTION</scope>
    <scope>ACTIVITY REGULATION</scope>
    <scope>BIOPHYSICOCHEMICAL PROPERTIES</scope>
    <scope>SUBUNIT</scope>
    <scope>SUBCELLULAR LOCATION</scope>
    <scope>TISSUE SPECIFICITY</scope>
    <source>
        <tissue>Venom</tissue>
    </source>
</reference>
<reference key="2">
    <citation type="journal article" date="2002" name="Acta Crystallogr. D">
        <title>Crystallization of bothrombin, a fibrinogen-converting serine protease isolated from the venom of Bothrops jararaca.</title>
        <authorList>
            <person name="Watanabe L."/>
            <person name="Vieira D.F."/>
            <person name="Bortoleto R.K."/>
            <person name="Arni R.K."/>
        </authorList>
    </citation>
    <scope>CRYSTALLIZATION</scope>
</reference>